<reference key="1">
    <citation type="journal article" date="1995" name="Science">
        <title>Whole-genome random sequencing and assembly of Haemophilus influenzae Rd.</title>
        <authorList>
            <person name="Fleischmann R.D."/>
            <person name="Adams M.D."/>
            <person name="White O."/>
            <person name="Clayton R.A."/>
            <person name="Kirkness E.F."/>
            <person name="Kerlavage A.R."/>
            <person name="Bult C.J."/>
            <person name="Tomb J.-F."/>
            <person name="Dougherty B.A."/>
            <person name="Merrick J.M."/>
            <person name="McKenney K."/>
            <person name="Sutton G.G."/>
            <person name="FitzHugh W."/>
            <person name="Fields C.A."/>
            <person name="Gocayne J.D."/>
            <person name="Scott J.D."/>
            <person name="Shirley R."/>
            <person name="Liu L.-I."/>
            <person name="Glodek A."/>
            <person name="Kelley J.M."/>
            <person name="Weidman J.F."/>
            <person name="Phillips C.A."/>
            <person name="Spriggs T."/>
            <person name="Hedblom E."/>
            <person name="Cotton M.D."/>
            <person name="Utterback T.R."/>
            <person name="Hanna M.C."/>
            <person name="Nguyen D.T."/>
            <person name="Saudek D.M."/>
            <person name="Brandon R.C."/>
            <person name="Fine L.D."/>
            <person name="Fritchman J.L."/>
            <person name="Fuhrmann J.L."/>
            <person name="Geoghagen N.S.M."/>
            <person name="Gnehm C.L."/>
            <person name="McDonald L.A."/>
            <person name="Small K.V."/>
            <person name="Fraser C.M."/>
            <person name="Smith H.O."/>
            <person name="Venter J.C."/>
        </authorList>
    </citation>
    <scope>NUCLEOTIDE SEQUENCE [LARGE SCALE GENOMIC DNA]</scope>
    <source>
        <strain>ATCC 51907 / DSM 11121 / KW20 / Rd</strain>
    </source>
</reference>
<name>PDXY_HAEIN</name>
<sequence length="288" mass="31772">MKNVLSIQSHVVYGFAGNKSATFPMQLLGVDVWALNTVQFSNHTQYGKWTGMVIPQEQIREIVTGLDNIEKLQECDALLSGYLGSAEQVDQILFALEQIKLRNPNALYLCDPVMPHPKKICVVANGVREALIEKAIPVADIMTPNLHELRQLTEFPINTFDDVLKAVNALIAKGVKKVLVKHLGSAGKINDPDTFEIIMATPEGVWHLSRPLYQFNFEPVGVGDLIAGTFLANLLNGKSDVEAFEAMNNEVAGVMKTTFELGSYELQTIAARFEILNPSSNYKAEKVA</sequence>
<gene>
    <name evidence="1" type="primary">pdxY</name>
    <name type="ordered locus">HI_0405</name>
</gene>
<accession>P44690</accession>
<evidence type="ECO:0000255" key="1">
    <source>
        <dbReference type="HAMAP-Rule" id="MF_01639"/>
    </source>
</evidence>
<keyword id="KW-0067">ATP-binding</keyword>
<keyword id="KW-0418">Kinase</keyword>
<keyword id="KW-0460">Magnesium</keyword>
<keyword id="KW-0547">Nucleotide-binding</keyword>
<keyword id="KW-1185">Reference proteome</keyword>
<keyword id="KW-0808">Transferase</keyword>
<feature type="chain" id="PRO_0000213346" description="Pyridoxal kinase PdxY">
    <location>
        <begin position="1"/>
        <end position="288"/>
    </location>
</feature>
<feature type="binding site" evidence="1">
    <location>
        <position position="9"/>
    </location>
    <ligand>
        <name>substrate</name>
    </ligand>
</feature>
<feature type="binding site" evidence="1">
    <location>
        <begin position="44"/>
        <end position="45"/>
    </location>
    <ligand>
        <name>substrate</name>
    </ligand>
</feature>
<feature type="binding site" evidence="1">
    <location>
        <position position="111"/>
    </location>
    <ligand>
        <name>ATP</name>
        <dbReference type="ChEBI" id="CHEBI:30616"/>
    </ligand>
</feature>
<feature type="binding site" evidence="1">
    <location>
        <position position="148"/>
    </location>
    <ligand>
        <name>ATP</name>
        <dbReference type="ChEBI" id="CHEBI:30616"/>
    </ligand>
</feature>
<feature type="binding site" evidence="1">
    <location>
        <position position="181"/>
    </location>
    <ligand>
        <name>ATP</name>
        <dbReference type="ChEBI" id="CHEBI:30616"/>
    </ligand>
</feature>
<feature type="binding site" evidence="1">
    <location>
        <position position="224"/>
    </location>
    <ligand>
        <name>substrate</name>
    </ligand>
</feature>
<comment type="function">
    <text evidence="1">Pyridoxal kinase involved in the salvage pathway of pyridoxal 5'-phosphate (PLP). Catalyzes the phosphorylation of pyridoxal to PLP.</text>
</comment>
<comment type="catalytic activity">
    <reaction evidence="1">
        <text>pyridoxal + ATP = pyridoxal 5'-phosphate + ADP + H(+)</text>
        <dbReference type="Rhea" id="RHEA:10224"/>
        <dbReference type="ChEBI" id="CHEBI:15378"/>
        <dbReference type="ChEBI" id="CHEBI:17310"/>
        <dbReference type="ChEBI" id="CHEBI:30616"/>
        <dbReference type="ChEBI" id="CHEBI:456216"/>
        <dbReference type="ChEBI" id="CHEBI:597326"/>
        <dbReference type="EC" id="2.7.1.35"/>
    </reaction>
</comment>
<comment type="cofactor">
    <cofactor evidence="1">
        <name>Mg(2+)</name>
        <dbReference type="ChEBI" id="CHEBI:18420"/>
    </cofactor>
</comment>
<comment type="pathway">
    <text evidence="1">Cofactor metabolism; pyridoxal 5'-phosphate salvage; pyridoxal 5'-phosphate from pyridoxal: step 1/1.</text>
</comment>
<comment type="subunit">
    <text evidence="1">Homodimer.</text>
</comment>
<comment type="similarity">
    <text evidence="1">Belongs to the pyridoxine kinase family. PdxY subfamily.</text>
</comment>
<proteinExistence type="inferred from homology"/>
<dbReference type="EC" id="2.7.1.35" evidence="1"/>
<dbReference type="EMBL" id="L42023">
    <property type="protein sequence ID" value="AAC22064.1"/>
    <property type="molecule type" value="Genomic_DNA"/>
</dbReference>
<dbReference type="PIR" id="E64151">
    <property type="entry name" value="E64151"/>
</dbReference>
<dbReference type="RefSeq" id="NP_438567.1">
    <property type="nucleotide sequence ID" value="NC_000907.1"/>
</dbReference>
<dbReference type="SMR" id="P44690"/>
<dbReference type="STRING" id="71421.HI_0405"/>
<dbReference type="EnsemblBacteria" id="AAC22064">
    <property type="protein sequence ID" value="AAC22064"/>
    <property type="gene ID" value="HI_0405"/>
</dbReference>
<dbReference type="KEGG" id="hin:HI_0405"/>
<dbReference type="PATRIC" id="fig|71421.8.peg.424"/>
<dbReference type="eggNOG" id="COG2240">
    <property type="taxonomic scope" value="Bacteria"/>
</dbReference>
<dbReference type="HOGENOM" id="CLU_046496_3_0_6"/>
<dbReference type="OrthoDB" id="9800808at2"/>
<dbReference type="PhylomeDB" id="P44690"/>
<dbReference type="BioCyc" id="HINF71421:G1GJ1-420-MONOMER"/>
<dbReference type="UniPathway" id="UPA01068">
    <property type="reaction ID" value="UER00298"/>
</dbReference>
<dbReference type="Proteomes" id="UP000000579">
    <property type="component" value="Chromosome"/>
</dbReference>
<dbReference type="GO" id="GO:0005829">
    <property type="term" value="C:cytosol"/>
    <property type="evidence" value="ECO:0000318"/>
    <property type="project" value="GO_Central"/>
</dbReference>
<dbReference type="GO" id="GO:0005524">
    <property type="term" value="F:ATP binding"/>
    <property type="evidence" value="ECO:0007669"/>
    <property type="project" value="UniProtKB-UniRule"/>
</dbReference>
<dbReference type="GO" id="GO:0000287">
    <property type="term" value="F:magnesium ion binding"/>
    <property type="evidence" value="ECO:0007669"/>
    <property type="project" value="UniProtKB-UniRule"/>
</dbReference>
<dbReference type="GO" id="GO:0008478">
    <property type="term" value="F:pyridoxal kinase activity"/>
    <property type="evidence" value="ECO:0000318"/>
    <property type="project" value="GO_Central"/>
</dbReference>
<dbReference type="GO" id="GO:0009443">
    <property type="term" value="P:pyridoxal 5'-phosphate salvage"/>
    <property type="evidence" value="ECO:0000318"/>
    <property type="project" value="GO_Central"/>
</dbReference>
<dbReference type="CDD" id="cd01173">
    <property type="entry name" value="pyridoxal_pyridoxamine_kinase"/>
    <property type="match status" value="1"/>
</dbReference>
<dbReference type="FunFam" id="3.40.1190.20:FF:000008">
    <property type="entry name" value="Pyridoxal kinase PdxY"/>
    <property type="match status" value="1"/>
</dbReference>
<dbReference type="Gene3D" id="3.40.1190.20">
    <property type="match status" value="1"/>
</dbReference>
<dbReference type="HAMAP" id="MF_01639">
    <property type="entry name" value="PdxY"/>
    <property type="match status" value="1"/>
</dbReference>
<dbReference type="InterPro" id="IPR013749">
    <property type="entry name" value="PM/HMP-P_kinase-1"/>
</dbReference>
<dbReference type="InterPro" id="IPR004625">
    <property type="entry name" value="PyrdxlKinase"/>
</dbReference>
<dbReference type="InterPro" id="IPR023685">
    <property type="entry name" value="Pyridoxal_kinase_PdxY"/>
</dbReference>
<dbReference type="InterPro" id="IPR029056">
    <property type="entry name" value="Ribokinase-like"/>
</dbReference>
<dbReference type="NCBIfam" id="NF004398">
    <property type="entry name" value="PRK05756.1"/>
    <property type="match status" value="1"/>
</dbReference>
<dbReference type="NCBIfam" id="TIGR00687">
    <property type="entry name" value="pyridox_kin"/>
    <property type="match status" value="1"/>
</dbReference>
<dbReference type="PANTHER" id="PTHR10534">
    <property type="entry name" value="PYRIDOXAL KINASE"/>
    <property type="match status" value="1"/>
</dbReference>
<dbReference type="PANTHER" id="PTHR10534:SF2">
    <property type="entry name" value="PYRIDOXAL KINASE"/>
    <property type="match status" value="1"/>
</dbReference>
<dbReference type="Pfam" id="PF08543">
    <property type="entry name" value="Phos_pyr_kin"/>
    <property type="match status" value="1"/>
</dbReference>
<dbReference type="SUPFAM" id="SSF53613">
    <property type="entry name" value="Ribokinase-like"/>
    <property type="match status" value="1"/>
</dbReference>
<organism>
    <name type="scientific">Haemophilus influenzae (strain ATCC 51907 / DSM 11121 / KW20 / Rd)</name>
    <dbReference type="NCBI Taxonomy" id="71421"/>
    <lineage>
        <taxon>Bacteria</taxon>
        <taxon>Pseudomonadati</taxon>
        <taxon>Pseudomonadota</taxon>
        <taxon>Gammaproteobacteria</taxon>
        <taxon>Pasteurellales</taxon>
        <taxon>Pasteurellaceae</taxon>
        <taxon>Haemophilus</taxon>
    </lineage>
</organism>
<protein>
    <recommendedName>
        <fullName evidence="1">Pyridoxal kinase PdxY</fullName>
        <shortName evidence="1">PL kinase</shortName>
        <ecNumber evidence="1">2.7.1.35</ecNumber>
    </recommendedName>
</protein>